<sequence length="305" mass="33947">MSRIVIALGGNALLQNGEKRDYETQYEHAYKTFESLRFVTEDNEVVITHGNGPQVGDIQQSHDISGIGAYLHQSVAMSQGYIGEILANAYTNIKTKYNLRKNIFTIITRVLVDENDPAFSNPEKPIGRYYSDAEVEEARKNGWIMKKFRDGWRRVVPSPDPRQILEEPVIEYLLHNGNLPIAVGGGGVPVVRKGEQIHGIDAVIDKDLASSVLATAIRADFLMILTDVDNVYVNYGKPDQKGLHEVHVEEIEKYLKEGQFGEGSMKPKVMAAIRFIKNGGKKAFITSIENSMNALSGRSGTIIVR</sequence>
<name>ARCC_THEAC</name>
<gene>
    <name type="primary">arcC</name>
    <name type="ordered locus">Ta1350</name>
</gene>
<keyword id="KW-0056">Arginine metabolism</keyword>
<keyword id="KW-0067">ATP-binding</keyword>
<keyword id="KW-0963">Cytoplasm</keyword>
<keyword id="KW-0418">Kinase</keyword>
<keyword id="KW-0547">Nucleotide-binding</keyword>
<keyword id="KW-1185">Reference proteome</keyword>
<keyword id="KW-0808">Transferase</keyword>
<comment type="catalytic activity">
    <reaction>
        <text>hydrogencarbonate + NH4(+) + ATP = carbamoyl phosphate + ADP + H2O + H(+)</text>
        <dbReference type="Rhea" id="RHEA:10152"/>
        <dbReference type="ChEBI" id="CHEBI:15377"/>
        <dbReference type="ChEBI" id="CHEBI:15378"/>
        <dbReference type="ChEBI" id="CHEBI:17544"/>
        <dbReference type="ChEBI" id="CHEBI:28938"/>
        <dbReference type="ChEBI" id="CHEBI:30616"/>
        <dbReference type="ChEBI" id="CHEBI:58228"/>
        <dbReference type="ChEBI" id="CHEBI:456216"/>
        <dbReference type="EC" id="2.7.2.2"/>
    </reaction>
</comment>
<comment type="pathway">
    <text>Metabolic intermediate metabolism; carbamoyl phosphate degradation; CO(2) and NH(3) from carbamoyl phosphate: step 1/1.</text>
</comment>
<comment type="subcellular location">
    <subcellularLocation>
        <location evidence="1">Cytoplasm</location>
    </subcellularLocation>
</comment>
<comment type="similarity">
    <text evidence="1">Belongs to the carbamate kinase family.</text>
</comment>
<comment type="sequence caution" evidence="1">
    <conflict type="erroneous initiation">
        <sequence resource="EMBL-CDS" id="CAC12471"/>
    </conflict>
</comment>
<evidence type="ECO:0000305" key="1"/>
<proteinExistence type="inferred from homology"/>
<protein>
    <recommendedName>
        <fullName>Carbamate kinase</fullName>
        <ecNumber>2.7.2.2</ecNumber>
    </recommendedName>
</protein>
<organism>
    <name type="scientific">Thermoplasma acidophilum (strain ATCC 25905 / DSM 1728 / JCM 9062 / NBRC 15155 / AMRC-C165)</name>
    <dbReference type="NCBI Taxonomy" id="273075"/>
    <lineage>
        <taxon>Archaea</taxon>
        <taxon>Methanobacteriati</taxon>
        <taxon>Thermoplasmatota</taxon>
        <taxon>Thermoplasmata</taxon>
        <taxon>Thermoplasmatales</taxon>
        <taxon>Thermoplasmataceae</taxon>
        <taxon>Thermoplasma</taxon>
    </lineage>
</organism>
<dbReference type="EC" id="2.7.2.2"/>
<dbReference type="EMBL" id="AL445067">
    <property type="protein sequence ID" value="CAC12471.1"/>
    <property type="status" value="ALT_INIT"/>
    <property type="molecule type" value="Genomic_DNA"/>
</dbReference>
<dbReference type="RefSeq" id="WP_010901757.1">
    <property type="nucleotide sequence ID" value="NC_002578.1"/>
</dbReference>
<dbReference type="SMR" id="Q9HII9"/>
<dbReference type="STRING" id="273075.gene:9572575"/>
<dbReference type="PaxDb" id="273075-Ta1350m"/>
<dbReference type="EnsemblBacteria" id="CAC12471">
    <property type="protein sequence ID" value="CAC12471"/>
    <property type="gene ID" value="CAC12471"/>
</dbReference>
<dbReference type="KEGG" id="tac:Ta1350"/>
<dbReference type="eggNOG" id="arCOG00863">
    <property type="taxonomic scope" value="Archaea"/>
</dbReference>
<dbReference type="HOGENOM" id="CLU_076278_0_0_2"/>
<dbReference type="InParanoid" id="Q9HII9"/>
<dbReference type="OrthoDB" id="31128at2157"/>
<dbReference type="UniPathway" id="UPA00996">
    <property type="reaction ID" value="UER00366"/>
</dbReference>
<dbReference type="Proteomes" id="UP000001024">
    <property type="component" value="Chromosome"/>
</dbReference>
<dbReference type="GO" id="GO:0005829">
    <property type="term" value="C:cytosol"/>
    <property type="evidence" value="ECO:0007669"/>
    <property type="project" value="TreeGrafter"/>
</dbReference>
<dbReference type="GO" id="GO:0005524">
    <property type="term" value="F:ATP binding"/>
    <property type="evidence" value="ECO:0007669"/>
    <property type="project" value="UniProtKB-KW"/>
</dbReference>
<dbReference type="GO" id="GO:0008804">
    <property type="term" value="F:carbamate kinase activity"/>
    <property type="evidence" value="ECO:0007669"/>
    <property type="project" value="UniProtKB-EC"/>
</dbReference>
<dbReference type="GO" id="GO:0019546">
    <property type="term" value="P:arginine deiminase pathway"/>
    <property type="evidence" value="ECO:0007669"/>
    <property type="project" value="TreeGrafter"/>
</dbReference>
<dbReference type="CDD" id="cd04235">
    <property type="entry name" value="AAK_CK"/>
    <property type="match status" value="1"/>
</dbReference>
<dbReference type="FunFam" id="3.40.1160.10:FF:000007">
    <property type="entry name" value="Carbamate kinase"/>
    <property type="match status" value="1"/>
</dbReference>
<dbReference type="Gene3D" id="3.40.1160.10">
    <property type="entry name" value="Acetylglutamate kinase-like"/>
    <property type="match status" value="1"/>
</dbReference>
<dbReference type="InterPro" id="IPR036393">
    <property type="entry name" value="AceGlu_kinase-like_sf"/>
</dbReference>
<dbReference type="InterPro" id="IPR001048">
    <property type="entry name" value="Asp/Glu/Uridylate_kinase"/>
</dbReference>
<dbReference type="InterPro" id="IPR003964">
    <property type="entry name" value="Carb_kinase"/>
</dbReference>
<dbReference type="NCBIfam" id="TIGR00746">
    <property type="entry name" value="arcC"/>
    <property type="match status" value="1"/>
</dbReference>
<dbReference type="NCBIfam" id="NF009007">
    <property type="entry name" value="PRK12352.1"/>
    <property type="match status" value="1"/>
</dbReference>
<dbReference type="PANTHER" id="PTHR30409">
    <property type="entry name" value="CARBAMATE KINASE"/>
    <property type="match status" value="1"/>
</dbReference>
<dbReference type="PANTHER" id="PTHR30409:SF1">
    <property type="entry name" value="CARBAMATE KINASE-RELATED"/>
    <property type="match status" value="1"/>
</dbReference>
<dbReference type="Pfam" id="PF00696">
    <property type="entry name" value="AA_kinase"/>
    <property type="match status" value="1"/>
</dbReference>
<dbReference type="PIRSF" id="PIRSF000723">
    <property type="entry name" value="Carbamate_kin"/>
    <property type="match status" value="1"/>
</dbReference>
<dbReference type="PRINTS" id="PR01469">
    <property type="entry name" value="CARBMTKINASE"/>
</dbReference>
<dbReference type="SUPFAM" id="SSF53633">
    <property type="entry name" value="Carbamate kinase-like"/>
    <property type="match status" value="1"/>
</dbReference>
<feature type="chain" id="PRO_0000185143" description="Carbamate kinase">
    <location>
        <begin position="1"/>
        <end position="305"/>
    </location>
</feature>
<reference key="1">
    <citation type="journal article" date="2000" name="Nature">
        <title>The genome sequence of the thermoacidophilic scavenger Thermoplasma acidophilum.</title>
        <authorList>
            <person name="Ruepp A."/>
            <person name="Graml W."/>
            <person name="Santos-Martinez M.-L."/>
            <person name="Koretke K.K."/>
            <person name="Volker C."/>
            <person name="Mewes H.-W."/>
            <person name="Frishman D."/>
            <person name="Stocker S."/>
            <person name="Lupas A.N."/>
            <person name="Baumeister W."/>
        </authorList>
    </citation>
    <scope>NUCLEOTIDE SEQUENCE [LARGE SCALE GENOMIC DNA]</scope>
    <source>
        <strain>ATCC 25905 / DSM 1728 / JCM 9062 / NBRC 15155 / AMRC-C165</strain>
    </source>
</reference>
<accession>Q9HII9</accession>